<comment type="function">
    <text evidence="2 3 7">Photoreceptor which exists in two forms that are reversibly interconvertible by light: far-red light (733 nm) converts protein to the red-absorbing (Pr) form, while red light (630 nm) partly converts the protein to the far-red-absorbing (Pfr) form (PubMed:27107635). Regulates virulence of X.campestris pv. campestris on its host plants, perhaps by fine-tuning expression to ambient light levels and/or spatial cues (PubMed:27621284). The Pr form may sense light and partially inhibit virulence; in the dark (Pfr form) biofilm and xanathan production rise and bacteria are more virulent (PubMed:27621284). Strains overexpressing this protein have significantly decreased amounts of extracellular beta-1,4-endoglucanase, produce less xanthin and have decreased transcription of genes involved in virulence such as endoglucanases, type 2 secretion systems, xanthan production and flagellar-dependent motility (PubMed:27621284).</text>
</comment>
<comment type="subunit">
    <text evidence="2">Forms head-to-head homodimers (PubMed:27107635).</text>
</comment>
<comment type="induction">
    <text evidence="3">Expressed in dark and light (at protein level). Part of the bphO-bphP operon (PubMed:27621284).</text>
</comment>
<comment type="domain">
    <text evidence="6">Composed of 4 domains; in the N-terminus the PAS2-GAF-PHY domains form the photosensor while the C-terminal PAS9 domain is the output module. Long linker helices serve as connectors within the GAF-PHY and PHY-PAS9 domain pairs, forming a helical spine where the dimer interface is assembled. Thus both the photosensor and PAS9 domains are required for dimerization. Within the PHY domain is the mobile tongue domain (residues 452-480) that probably serves as a gatekeeper to the chromophore-binding pocket, in the Pr form it is a beta-sheet, in a R.palustris Pfr crystal it is an alpha helix (AC B3Q7C0). In the dark (Pfr) state the protein is compact and protease resistant, far-red light treated protein (Pr) is quickly degraded to its domains, with important cuts occurring in the hinge region (just before the PAS9 output domain at about residue 512) and in the tongue domain (about residue 469).</text>
</comment>
<comment type="PTM">
    <text evidence="2">Contains one covalently linked biliverdin IX-alpha chromophore; present in the crystal structure as a mixture of Pr and Meta-R configurations.</text>
</comment>
<comment type="disruption phenotype">
    <text evidence="3">No growth phenotype in liquid culture, slightly better growth on plates, strain loses slight sensitivity to white light. In planta is more virulent, with increased growth in host (A.thaliana) leaves, mutant opens leaf stomata better than wild-type, has decreased leaf callose deposits, produces more xanthan than wild-type and is insensitive to white light, has considerably increased sliding and slightly increased swimming mobility, generates mature biofilm in the light and dark.</text>
</comment>
<comment type="miscellaneous">
    <text evidence="7">X.campestris pv. campestris colonizes plant leaves and is responsible for black rot in cruciferous plants (Brassicaceae). In the cruciferous model host organism A.thaliana, morning and midday infections result in more hypersensitive responses than evening or night infections, suggesting light plays a role in virulence.</text>
</comment>
<comment type="similarity">
    <text evidence="5">In the N-terminal section; belongs to the phytochrome family.</text>
</comment>
<feature type="chain" id="PRO_0000437191" description="Bacteriophytochrome">
    <location>
        <begin position="1"/>
        <end position="634"/>
    </location>
</feature>
<feature type="domain" description="PAS 1" evidence="6">
    <location>
        <begin position="13"/>
        <end position="118"/>
    </location>
</feature>
<feature type="domain" description="GAF" evidence="6">
    <location>
        <begin position="151"/>
        <end position="305"/>
    </location>
</feature>
<feature type="domain" description="PAS 2" evidence="1">
    <location>
        <begin position="515"/>
        <end position="590"/>
    </location>
</feature>
<feature type="region of interest" description="Photosensory core domain" evidence="6">
    <location>
        <begin position="13"/>
        <end position="514"/>
    </location>
</feature>
<feature type="region of interest" description="Phytochrome-specific (PHY)" evidence="6">
    <location>
        <begin position="325"/>
        <end position="508"/>
    </location>
</feature>
<feature type="region of interest" description="Tongue domain" evidence="6">
    <location>
        <begin position="452"/>
        <end position="480"/>
    </location>
</feature>
<feature type="region of interest" description="PAS9, output module, not required to bind biliverdin IX-alpha, required for dimerization" evidence="6">
    <location>
        <begin position="515"/>
        <end position="634"/>
    </location>
</feature>
<feature type="binding site" description="covalent" evidence="2">
    <location>
        <position position="13"/>
    </location>
    <ligand>
        <name>biliverdin IXalpha</name>
        <dbReference type="ChEBI" id="CHEBI:57991"/>
    </ligand>
</feature>
<feature type="mutagenesis site" description="Loss of photo-inducible Pr-Pfr conversion; protein still binds pigment. No difference in growth in host, increased callose deposits, increased xanthan production, increased sliding and swimming mobility." evidence="3">
    <original>C</original>
    <variation>S</variation>
    <location>
        <position position="13"/>
    </location>
</feature>
<feature type="helix" evidence="11">
    <location>
        <begin position="12"/>
        <end position="15"/>
    </location>
</feature>
<feature type="strand" evidence="11">
    <location>
        <begin position="22"/>
        <end position="24"/>
    </location>
</feature>
<feature type="strand" evidence="11">
    <location>
        <begin position="28"/>
        <end position="33"/>
    </location>
</feature>
<feature type="turn" evidence="11">
    <location>
        <begin position="35"/>
        <end position="37"/>
    </location>
</feature>
<feature type="strand" evidence="11">
    <location>
        <begin position="39"/>
        <end position="44"/>
    </location>
</feature>
<feature type="helix" evidence="11">
    <location>
        <begin position="47"/>
        <end position="51"/>
    </location>
</feature>
<feature type="helix" evidence="11">
    <location>
        <begin position="55"/>
        <end position="58"/>
    </location>
</feature>
<feature type="helix" evidence="11">
    <location>
        <begin position="63"/>
        <end position="66"/>
    </location>
</feature>
<feature type="strand" evidence="11">
    <location>
        <begin position="78"/>
        <end position="80"/>
    </location>
</feature>
<feature type="strand" evidence="11">
    <location>
        <begin position="82"/>
        <end position="90"/>
    </location>
</feature>
<feature type="strand" evidence="10">
    <location>
        <begin position="94"/>
        <end position="96"/>
    </location>
</feature>
<feature type="strand" evidence="11">
    <location>
        <begin position="102"/>
        <end position="108"/>
    </location>
</feature>
<feature type="strand" evidence="11">
    <location>
        <begin position="113"/>
        <end position="121"/>
    </location>
</feature>
<feature type="helix" evidence="11">
    <location>
        <begin position="129"/>
        <end position="139"/>
    </location>
</feature>
<feature type="helix" evidence="11">
    <location>
        <begin position="145"/>
        <end position="159"/>
    </location>
</feature>
<feature type="strand" evidence="11">
    <location>
        <begin position="163"/>
        <end position="170"/>
    </location>
</feature>
<feature type="strand" evidence="11">
    <location>
        <begin position="176"/>
        <end position="183"/>
    </location>
</feature>
<feature type="strand" evidence="9">
    <location>
        <begin position="185"/>
        <end position="187"/>
    </location>
</feature>
<feature type="strand" evidence="9">
    <location>
        <begin position="193"/>
        <end position="195"/>
    </location>
</feature>
<feature type="helix" evidence="11">
    <location>
        <begin position="197"/>
        <end position="199"/>
    </location>
</feature>
<feature type="helix" evidence="11">
    <location>
        <begin position="202"/>
        <end position="211"/>
    </location>
</feature>
<feature type="strand" evidence="11">
    <location>
        <begin position="212"/>
        <end position="217"/>
    </location>
</feature>
<feature type="strand" evidence="11">
    <location>
        <begin position="224"/>
        <end position="230"/>
    </location>
</feature>
<feature type="turn" evidence="11">
    <location>
        <begin position="232"/>
        <end position="234"/>
    </location>
</feature>
<feature type="helix" evidence="11">
    <location>
        <begin position="250"/>
        <end position="259"/>
    </location>
</feature>
<feature type="strand" evidence="11">
    <location>
        <begin position="263"/>
        <end position="271"/>
    </location>
</feature>
<feature type="strand" evidence="11">
    <location>
        <begin position="274"/>
        <end position="285"/>
    </location>
</feature>
<feature type="helix" evidence="11">
    <location>
        <begin position="291"/>
        <end position="332"/>
    </location>
</feature>
<feature type="turn" evidence="11">
    <location>
        <begin position="333"/>
        <end position="336"/>
    </location>
</feature>
<feature type="strand" evidence="11">
    <location>
        <begin position="337"/>
        <end position="339"/>
    </location>
</feature>
<feature type="helix" evidence="11">
    <location>
        <begin position="343"/>
        <end position="347"/>
    </location>
</feature>
<feature type="helix" evidence="11">
    <location>
        <begin position="349"/>
        <end position="354"/>
    </location>
</feature>
<feature type="turn" evidence="11">
    <location>
        <begin position="355"/>
        <end position="357"/>
    </location>
</feature>
<feature type="strand" evidence="11">
    <location>
        <begin position="359"/>
        <end position="365"/>
    </location>
</feature>
<feature type="strand" evidence="11">
    <location>
        <begin position="368"/>
        <end position="371"/>
    </location>
</feature>
<feature type="helix" evidence="11">
    <location>
        <begin position="378"/>
        <end position="390"/>
    </location>
</feature>
<feature type="helix" evidence="10">
    <location>
        <begin position="391"/>
        <end position="393"/>
    </location>
</feature>
<feature type="helix" evidence="10">
    <location>
        <begin position="394"/>
        <end position="399"/>
    </location>
</feature>
<feature type="strand" evidence="11">
    <location>
        <begin position="402"/>
        <end position="408"/>
    </location>
</feature>
<feature type="helix" evidence="11">
    <location>
        <begin position="409"/>
        <end position="412"/>
    </location>
</feature>
<feature type="helix" evidence="11">
    <location>
        <begin position="414"/>
        <end position="419"/>
    </location>
</feature>
<feature type="helix" evidence="11">
    <location>
        <begin position="420"/>
        <end position="423"/>
    </location>
</feature>
<feature type="strand" evidence="11">
    <location>
        <begin position="424"/>
        <end position="431"/>
    </location>
</feature>
<feature type="strand" evidence="10">
    <location>
        <begin position="432"/>
        <end position="434"/>
    </location>
</feature>
<feature type="strand" evidence="11">
    <location>
        <begin position="435"/>
        <end position="443"/>
    </location>
</feature>
<feature type="helix" evidence="11">
    <location>
        <begin position="446"/>
        <end position="449"/>
    </location>
</feature>
<feature type="strand" evidence="11">
    <location>
        <begin position="452"/>
        <end position="454"/>
    </location>
</feature>
<feature type="turn" evidence="11">
    <location>
        <begin position="456"/>
        <end position="460"/>
    </location>
</feature>
<feature type="helix" evidence="11">
    <location>
        <begin position="471"/>
        <end position="481"/>
    </location>
</feature>
<feature type="turn" evidence="11">
    <location>
        <begin position="482"/>
        <end position="484"/>
    </location>
</feature>
<feature type="helix" evidence="11">
    <location>
        <begin position="491"/>
        <end position="510"/>
    </location>
</feature>
<feature type="helix" evidence="11">
    <location>
        <begin position="518"/>
        <end position="524"/>
    </location>
</feature>
<feature type="strand" evidence="11">
    <location>
        <begin position="531"/>
        <end position="534"/>
    </location>
</feature>
<feature type="strand" evidence="10">
    <location>
        <begin position="538"/>
        <end position="540"/>
    </location>
</feature>
<feature type="strand" evidence="11">
    <location>
        <begin position="543"/>
        <end position="547"/>
    </location>
</feature>
<feature type="helix" evidence="11">
    <location>
        <begin position="549"/>
        <end position="555"/>
    </location>
</feature>
<feature type="helix" evidence="11">
    <location>
        <begin position="559"/>
        <end position="562"/>
    </location>
</feature>
<feature type="turn" evidence="11">
    <location>
        <begin position="568"/>
        <end position="571"/>
    </location>
</feature>
<feature type="strand" evidence="11">
    <location>
        <begin position="578"/>
        <end position="580"/>
    </location>
</feature>
<feature type="helix" evidence="11">
    <location>
        <begin position="581"/>
        <end position="587"/>
    </location>
</feature>
<feature type="turn" evidence="11">
    <location>
        <begin position="588"/>
        <end position="590"/>
    </location>
</feature>
<feature type="strand" evidence="11">
    <location>
        <begin position="596"/>
        <end position="598"/>
    </location>
</feature>
<feature type="strand" evidence="11">
    <location>
        <begin position="608"/>
        <end position="610"/>
    </location>
</feature>
<feature type="strand" evidence="9">
    <location>
        <begin position="619"/>
        <end position="622"/>
    </location>
</feature>
<feature type="strand" evidence="11">
    <location>
        <begin position="625"/>
        <end position="629"/>
    </location>
</feature>
<accession>A0A0H2XCS3</accession>
<dbReference type="EMBL" id="CP000050">
    <property type="protein sequence ID" value="AAY51279.1"/>
    <property type="molecule type" value="Genomic_DNA"/>
</dbReference>
<dbReference type="RefSeq" id="WP_011270102.1">
    <property type="nucleotide sequence ID" value="NZ_CP155948.1"/>
</dbReference>
<dbReference type="PDB" id="5AKP">
    <property type="method" value="X-ray"/>
    <property type="resolution" value="3.25 A"/>
    <property type="chains" value="A/B=2-634"/>
</dbReference>
<dbReference type="PDB" id="5UYR">
    <property type="method" value="X-ray"/>
    <property type="resolution" value="3.45 A"/>
    <property type="chains" value="A/B=2-634"/>
</dbReference>
<dbReference type="PDB" id="6NDO">
    <property type="method" value="X-ray"/>
    <property type="resolution" value="3.58 A"/>
    <property type="chains" value="A/B=2-634"/>
</dbReference>
<dbReference type="PDB" id="6NDP">
    <property type="method" value="X-ray"/>
    <property type="resolution" value="3.89 A"/>
    <property type="chains" value="A/B=2-634"/>
</dbReference>
<dbReference type="PDB" id="6PL0">
    <property type="method" value="X-ray"/>
    <property type="resolution" value="2.96 A"/>
    <property type="chains" value="A/B=2-634"/>
</dbReference>
<dbReference type="PDB" id="7L59">
    <property type="method" value="X-ray"/>
    <property type="resolution" value="2.68 A"/>
    <property type="chains" value="A=2-634"/>
</dbReference>
<dbReference type="PDB" id="7L5A">
    <property type="method" value="X-ray"/>
    <property type="resolution" value="2.95 A"/>
    <property type="chains" value="A=2-511"/>
</dbReference>
<dbReference type="PDBsum" id="5AKP"/>
<dbReference type="PDBsum" id="5UYR"/>
<dbReference type="PDBsum" id="6NDO"/>
<dbReference type="PDBsum" id="6NDP"/>
<dbReference type="PDBsum" id="6PL0"/>
<dbReference type="PDBsum" id="7L59"/>
<dbReference type="PDBsum" id="7L5A"/>
<dbReference type="SMR" id="A0A0H2XCS3"/>
<dbReference type="KEGG" id="xcb:XC_4241"/>
<dbReference type="HOGENOM" id="CLU_000445_50_5_6"/>
<dbReference type="PHI-base" id="PHI:7645"/>
<dbReference type="Proteomes" id="UP000000420">
    <property type="component" value="Chromosome"/>
</dbReference>
<dbReference type="GO" id="GO:0009881">
    <property type="term" value="F:photoreceptor activity"/>
    <property type="evidence" value="ECO:0007669"/>
    <property type="project" value="UniProtKB-KW"/>
</dbReference>
<dbReference type="GO" id="GO:0009584">
    <property type="term" value="P:detection of visible light"/>
    <property type="evidence" value="ECO:0007669"/>
    <property type="project" value="InterPro"/>
</dbReference>
<dbReference type="GO" id="GO:0006355">
    <property type="term" value="P:regulation of DNA-templated transcription"/>
    <property type="evidence" value="ECO:0007669"/>
    <property type="project" value="InterPro"/>
</dbReference>
<dbReference type="CDD" id="cd00130">
    <property type="entry name" value="PAS"/>
    <property type="match status" value="1"/>
</dbReference>
<dbReference type="Gene3D" id="3.30.450.270">
    <property type="match status" value="1"/>
</dbReference>
<dbReference type="Gene3D" id="3.30.450.40">
    <property type="match status" value="1"/>
</dbReference>
<dbReference type="Gene3D" id="3.30.450.20">
    <property type="entry name" value="PAS domain"/>
    <property type="match status" value="2"/>
</dbReference>
<dbReference type="InterPro" id="IPR053587">
    <property type="entry name" value="Bacterial_phytochrome-like"/>
</dbReference>
<dbReference type="InterPro" id="IPR003018">
    <property type="entry name" value="GAF"/>
</dbReference>
<dbReference type="InterPro" id="IPR029016">
    <property type="entry name" value="GAF-like_dom_sf"/>
</dbReference>
<dbReference type="InterPro" id="IPR000014">
    <property type="entry name" value="PAS"/>
</dbReference>
<dbReference type="InterPro" id="IPR035965">
    <property type="entry name" value="PAS-like_dom_sf"/>
</dbReference>
<dbReference type="InterPro" id="IPR013654">
    <property type="entry name" value="PAS_2"/>
</dbReference>
<dbReference type="InterPro" id="IPR016132">
    <property type="entry name" value="Phyto_chromo_attachment"/>
</dbReference>
<dbReference type="InterPro" id="IPR001294">
    <property type="entry name" value="Phytochrome"/>
</dbReference>
<dbReference type="InterPro" id="IPR013515">
    <property type="entry name" value="Phytochrome_cen-reg"/>
</dbReference>
<dbReference type="InterPro" id="IPR043150">
    <property type="entry name" value="Phytochrome_PHY_sf"/>
</dbReference>
<dbReference type="NCBIfam" id="NF041576">
    <property type="entry name" value="bacphytchrmBphP"/>
    <property type="match status" value="1"/>
</dbReference>
<dbReference type="PANTHER" id="PTHR43065">
    <property type="entry name" value="SENSOR HISTIDINE KINASE"/>
    <property type="match status" value="1"/>
</dbReference>
<dbReference type="PANTHER" id="PTHR43065:SF42">
    <property type="entry name" value="TWO-COMPONENT SENSOR PPRA"/>
    <property type="match status" value="1"/>
</dbReference>
<dbReference type="Pfam" id="PF01590">
    <property type="entry name" value="GAF"/>
    <property type="match status" value="1"/>
</dbReference>
<dbReference type="Pfam" id="PF08446">
    <property type="entry name" value="PAS_2"/>
    <property type="match status" value="1"/>
</dbReference>
<dbReference type="Pfam" id="PF13426">
    <property type="entry name" value="PAS_9"/>
    <property type="match status" value="1"/>
</dbReference>
<dbReference type="Pfam" id="PF00360">
    <property type="entry name" value="PHY"/>
    <property type="match status" value="1"/>
</dbReference>
<dbReference type="PRINTS" id="PR01033">
    <property type="entry name" value="PHYTOCHROME"/>
</dbReference>
<dbReference type="SMART" id="SM00065">
    <property type="entry name" value="GAF"/>
    <property type="match status" value="1"/>
</dbReference>
<dbReference type="SMART" id="SM00091">
    <property type="entry name" value="PAS"/>
    <property type="match status" value="2"/>
</dbReference>
<dbReference type="SUPFAM" id="SSF55781">
    <property type="entry name" value="GAF domain-like"/>
    <property type="match status" value="2"/>
</dbReference>
<dbReference type="SUPFAM" id="SSF55785">
    <property type="entry name" value="PYP-like sensor domain (PAS domain)"/>
    <property type="match status" value="2"/>
</dbReference>
<dbReference type="PROSITE" id="PS50112">
    <property type="entry name" value="PAS"/>
    <property type="match status" value="1"/>
</dbReference>
<dbReference type="PROSITE" id="PS50046">
    <property type="entry name" value="PHYTOCHROME_2"/>
    <property type="match status" value="1"/>
</dbReference>
<reference key="1">
    <citation type="journal article" date="2005" name="Genome Res.">
        <title>Comparative and functional genomic analyses of the pathogenicity of phytopathogen Xanthomonas campestris pv. campestris.</title>
        <authorList>
            <person name="Qian W."/>
            <person name="Jia Y."/>
            <person name="Ren S.-X."/>
            <person name="He Y.-Q."/>
            <person name="Feng J.-X."/>
            <person name="Lu L.-F."/>
            <person name="Sun Q."/>
            <person name="Ying G."/>
            <person name="Tang D.-J."/>
            <person name="Tang H."/>
            <person name="Wu W."/>
            <person name="Hao P."/>
            <person name="Wang L."/>
            <person name="Jiang B.-L."/>
            <person name="Zeng S."/>
            <person name="Gu W.-Y."/>
            <person name="Lu G."/>
            <person name="Rong L."/>
            <person name="Tian Y."/>
            <person name="Yao Z."/>
            <person name="Fu G."/>
            <person name="Chen B."/>
            <person name="Fang R."/>
            <person name="Qiang B."/>
            <person name="Chen Z."/>
            <person name="Zhao G.-P."/>
            <person name="Tang J.-L."/>
            <person name="He C."/>
        </authorList>
    </citation>
    <scope>NUCLEOTIDE SEQUENCE [LARGE SCALE GENOMIC DNA]</scope>
    <source>
        <strain>8004</strain>
    </source>
</reference>
<reference key="2">
    <citation type="journal article" date="2016" name="EMBO Rep.">
        <title>Xanthomonas campestris attenuates virulence by sensing light through a bacteriophytochrome photoreceptor.</title>
        <authorList>
            <person name="Bonomi H.R."/>
            <person name="Toum L."/>
            <person name="Sycz G."/>
            <person name="Sieira R."/>
            <person name="Toscani A.M."/>
            <person name="Gudesblat G.E."/>
            <person name="Leskow F.C."/>
            <person name="Goldbaum F.A."/>
            <person name="Vojnov A.A."/>
            <person name="Malamud F."/>
        </authorList>
    </citation>
    <scope>FUNCTION</scope>
    <scope>INDUCTION</scope>
    <scope>OPERON</scope>
    <scope>DISRUPTION PHENOTYPE</scope>
    <scope>MUTAGENESIS OF CYS-13</scope>
    <source>
        <strain>8004</strain>
    </source>
</reference>
<reference evidence="8" key="3">
    <citation type="journal article" date="2016" name="J. Mol. Biol.">
        <title>Structure of the full-length bacteriophytochrome from the plant pathogen Xanthomonas campestris provides clues to its long-range signaling mechanism.</title>
        <authorList>
            <person name="Otero L.H."/>
            <person name="Klinke S."/>
            <person name="Rinaldi J."/>
            <person name="Velazquez-Escobar F."/>
            <person name="Mroginski M.A."/>
            <person name="Lopez M.F."/>
            <person name="Malamud F."/>
            <person name="Vojnov A.A."/>
            <person name="Hildebrandt P."/>
            <person name="Goldbaum F.A."/>
            <person name="Bonomi H.R."/>
        </authorList>
    </citation>
    <scope>X-RAY CRYSTALLOGRAPHY (3.25 ANGSTROMS) OF 2-634 FORM PR IN COMPLEX WITH BILIVERDIN CHROMOPHORE</scope>
    <scope>FUNCTION</scope>
    <scope>SUBUNIT</scope>
    <scope>DOMAIN</scope>
    <source>
        <strain>8004</strain>
    </source>
</reference>
<protein>
    <recommendedName>
        <fullName evidence="4">Bacteriophytochrome</fullName>
        <shortName>BphP</shortName>
    </recommendedName>
    <alternativeName>
        <fullName evidence="4">XccBphP</fullName>
    </alternativeName>
</protein>
<sequence length="634" mass="70355">MSTATNPLDLDVCAREPIHIPGLIQPYGVLLVIDPADGRIVQASTTAADLLGVPMAALLGMPYTQVLTLPEAQPFAVDDQPQHLMHAEVRFPQRATPPASAWVAAWHLYPQQWLVEMEPRDARLLDVTLREAMPLLRSVERDPGIAEAAVRVAKGLRSLIGFDRVMIYRFDEEWNGDIIAEARKPELEAYLGLHYPASDIPAQARALYLRNRVRQIADVGYQPSPIQPTVHPQLGTPVDLSDVSLRSVSPVHLEYLANMGVTATLVASIVVNDALWGLISCHHYSPHFTNHAMRDVTDAVARTLAGRIGALQAVARARLESVLLTVREKLITDFNDAEHMTVELLDDMAPDLMDVVDADGVAIFHGNDISRHGTTPDVAALRRIRDHIESEHHEALREDAVGALHVDAIGEVFPELADLAPLAAGFIFVPLMPQSRSALLWTRREQIQQIKWAGNPQLAKLEDIPNSRLSPRKSFDLWQQTVRGRARRWSPLHLESARSLRVLIELMERKRFQQDFTLLEASLSRLRDGVAIIERGTANAAHRLLFVNTAFADVCGSDVAELIGRELQTLYASDAPRANVELLQDALRNGRAAYVTLPLQVSDGAPVYRQFHLEPLPSPSGVTAHWLLQLRDPE</sequence>
<organism>
    <name type="scientific">Xanthomonas campestris pv. campestris (strain 8004)</name>
    <dbReference type="NCBI Taxonomy" id="314565"/>
    <lineage>
        <taxon>Bacteria</taxon>
        <taxon>Pseudomonadati</taxon>
        <taxon>Pseudomonadota</taxon>
        <taxon>Gammaproteobacteria</taxon>
        <taxon>Lysobacterales</taxon>
        <taxon>Lysobacteraceae</taxon>
        <taxon>Xanthomonas</taxon>
    </lineage>
</organism>
<keyword id="KW-0002">3D-structure</keyword>
<keyword id="KW-0157">Chromophore</keyword>
<keyword id="KW-0600">Photoreceptor protein</keyword>
<keyword id="KW-0675">Receptor</keyword>
<keyword id="KW-0716">Sensory transduction</keyword>
<keyword id="KW-0843">Virulence</keyword>
<name>BPHY_XANC8</name>
<proteinExistence type="evidence at protein level"/>
<gene>
    <name type="primary">bphP</name>
    <name type="ordered locus">XC_4241</name>
</gene>
<evidence type="ECO:0000255" key="1">
    <source>
        <dbReference type="PROSITE-ProRule" id="PRU00140"/>
    </source>
</evidence>
<evidence type="ECO:0000269" key="2">
    <source>
    </source>
</evidence>
<evidence type="ECO:0000269" key="3">
    <source>
    </source>
</evidence>
<evidence type="ECO:0000303" key="4">
    <source>
    </source>
</evidence>
<evidence type="ECO:0000305" key="5"/>
<evidence type="ECO:0000305" key="6">
    <source>
    </source>
</evidence>
<evidence type="ECO:0000305" key="7">
    <source>
    </source>
</evidence>
<evidence type="ECO:0007744" key="8">
    <source>
        <dbReference type="PDB" id="5AKP"/>
    </source>
</evidence>
<evidence type="ECO:0007829" key="9">
    <source>
        <dbReference type="PDB" id="5AKP"/>
    </source>
</evidence>
<evidence type="ECO:0007829" key="10">
    <source>
        <dbReference type="PDB" id="6PL0"/>
    </source>
</evidence>
<evidence type="ECO:0007829" key="11">
    <source>
        <dbReference type="PDB" id="7L59"/>
    </source>
</evidence>